<proteinExistence type="inferred from homology"/>
<comment type="function">
    <text evidence="1">Catalyzes both the ATP-dependent activation of exogenously supplied lipoate to lipoyl-AMP and the transfer of the activated lipoyl onto the lipoyl domains of lipoate-dependent enzymes.</text>
</comment>
<comment type="catalytic activity">
    <reaction evidence="1">
        <text>L-lysyl-[lipoyl-carrier protein] + (R)-lipoate + ATP = N(6)-[(R)-lipoyl]-L-lysyl-[lipoyl-carrier protein] + AMP + diphosphate + H(+)</text>
        <dbReference type="Rhea" id="RHEA:49288"/>
        <dbReference type="Rhea" id="RHEA-COMP:10500"/>
        <dbReference type="Rhea" id="RHEA-COMP:10502"/>
        <dbReference type="ChEBI" id="CHEBI:15378"/>
        <dbReference type="ChEBI" id="CHEBI:29969"/>
        <dbReference type="ChEBI" id="CHEBI:30616"/>
        <dbReference type="ChEBI" id="CHEBI:33019"/>
        <dbReference type="ChEBI" id="CHEBI:83088"/>
        <dbReference type="ChEBI" id="CHEBI:83099"/>
        <dbReference type="ChEBI" id="CHEBI:456215"/>
        <dbReference type="EC" id="6.3.1.20"/>
    </reaction>
</comment>
<comment type="pathway">
    <text evidence="1">Protein modification; protein lipoylation via exogenous pathway; protein N(6)-(lipoyl)lysine from lipoate: step 1/2.</text>
</comment>
<comment type="pathway">
    <text evidence="1">Protein modification; protein lipoylation via exogenous pathway; protein N(6)-(lipoyl)lysine from lipoate: step 2/2.</text>
</comment>
<comment type="subunit">
    <text evidence="1">Monomer.</text>
</comment>
<comment type="subcellular location">
    <subcellularLocation>
        <location evidence="1">Cytoplasm</location>
    </subcellularLocation>
</comment>
<comment type="miscellaneous">
    <text evidence="1">In the transfer reaction, the free carboxyl group of lipoic acid is attached via an amide linkage to the epsilon-amino group of a specific lysine residue of lipoyl domains of lipoate-dependent enzymes.</text>
</comment>
<comment type="similarity">
    <text evidence="1">Belongs to the LplA family.</text>
</comment>
<gene>
    <name evidence="1" type="primary">lplA</name>
    <name type="ordered locus">Bfl357</name>
</gene>
<dbReference type="EC" id="6.3.1.20" evidence="1"/>
<dbReference type="EMBL" id="BX248583">
    <property type="protein sequence ID" value="CAD83424.1"/>
    <property type="molecule type" value="Genomic_DNA"/>
</dbReference>
<dbReference type="SMR" id="Q7VR65"/>
<dbReference type="STRING" id="203907.Bfl357"/>
<dbReference type="KEGG" id="bfl:Bfl357"/>
<dbReference type="eggNOG" id="COG0095">
    <property type="taxonomic scope" value="Bacteria"/>
</dbReference>
<dbReference type="HOGENOM" id="CLU_022986_0_1_6"/>
<dbReference type="OrthoDB" id="9787898at2"/>
<dbReference type="UniPathway" id="UPA00537">
    <property type="reaction ID" value="UER00594"/>
</dbReference>
<dbReference type="UniPathway" id="UPA00537">
    <property type="reaction ID" value="UER00595"/>
</dbReference>
<dbReference type="Proteomes" id="UP000002192">
    <property type="component" value="Chromosome"/>
</dbReference>
<dbReference type="GO" id="GO:0005829">
    <property type="term" value="C:cytosol"/>
    <property type="evidence" value="ECO:0007669"/>
    <property type="project" value="TreeGrafter"/>
</dbReference>
<dbReference type="GO" id="GO:0005524">
    <property type="term" value="F:ATP binding"/>
    <property type="evidence" value="ECO:0007669"/>
    <property type="project" value="UniProtKB-KW"/>
</dbReference>
<dbReference type="GO" id="GO:0016979">
    <property type="term" value="F:lipoate-protein ligase activity"/>
    <property type="evidence" value="ECO:0007669"/>
    <property type="project" value="UniProtKB-UniRule"/>
</dbReference>
<dbReference type="GO" id="GO:0017118">
    <property type="term" value="F:lipoyltransferase activity"/>
    <property type="evidence" value="ECO:0007669"/>
    <property type="project" value="TreeGrafter"/>
</dbReference>
<dbReference type="GO" id="GO:0036211">
    <property type="term" value="P:protein modification process"/>
    <property type="evidence" value="ECO:0007669"/>
    <property type="project" value="InterPro"/>
</dbReference>
<dbReference type="CDD" id="cd16443">
    <property type="entry name" value="LplA"/>
    <property type="match status" value="1"/>
</dbReference>
<dbReference type="FunFam" id="3.30.930.10:FF:000024">
    <property type="entry name" value="Lipoate-protein ligase A"/>
    <property type="match status" value="1"/>
</dbReference>
<dbReference type="Gene3D" id="3.30.930.10">
    <property type="entry name" value="Bira Bifunctional Protein, Domain 2"/>
    <property type="match status" value="1"/>
</dbReference>
<dbReference type="Gene3D" id="3.30.390.50">
    <property type="entry name" value="CO dehydrogenase flavoprotein, C-terminal domain"/>
    <property type="match status" value="1"/>
</dbReference>
<dbReference type="HAMAP" id="MF_01602">
    <property type="entry name" value="LplA"/>
    <property type="match status" value="1"/>
</dbReference>
<dbReference type="InterPro" id="IPR045864">
    <property type="entry name" value="aa-tRNA-synth_II/BPL/LPL"/>
</dbReference>
<dbReference type="InterPro" id="IPR004143">
    <property type="entry name" value="BPL_LPL_catalytic"/>
</dbReference>
<dbReference type="InterPro" id="IPR023741">
    <property type="entry name" value="Lipoate_ligase_A"/>
</dbReference>
<dbReference type="InterPro" id="IPR019491">
    <property type="entry name" value="Lipoate_protein_ligase_C"/>
</dbReference>
<dbReference type="InterPro" id="IPR004562">
    <property type="entry name" value="LipoylTrfase_LipoateP_Ligase"/>
</dbReference>
<dbReference type="NCBIfam" id="TIGR00545">
    <property type="entry name" value="lipoyltrans"/>
    <property type="match status" value="1"/>
</dbReference>
<dbReference type="PANTHER" id="PTHR12561">
    <property type="entry name" value="LIPOATE-PROTEIN LIGASE"/>
    <property type="match status" value="1"/>
</dbReference>
<dbReference type="PANTHER" id="PTHR12561:SF3">
    <property type="entry name" value="LIPOYLTRANSFERASE 1, MITOCHONDRIAL"/>
    <property type="match status" value="1"/>
</dbReference>
<dbReference type="Pfam" id="PF10437">
    <property type="entry name" value="Lip_prot_lig_C"/>
    <property type="match status" value="1"/>
</dbReference>
<dbReference type="Pfam" id="PF21948">
    <property type="entry name" value="LplA-B_cat"/>
    <property type="match status" value="1"/>
</dbReference>
<dbReference type="SUPFAM" id="SSF55681">
    <property type="entry name" value="Class II aaRS and biotin synthetases"/>
    <property type="match status" value="1"/>
</dbReference>
<dbReference type="SUPFAM" id="SSF82649">
    <property type="entry name" value="SufE/NifU"/>
    <property type="match status" value="1"/>
</dbReference>
<dbReference type="PROSITE" id="PS51733">
    <property type="entry name" value="BPL_LPL_CATALYTIC"/>
    <property type="match status" value="1"/>
</dbReference>
<accession>Q7VR65</accession>
<reference key="1">
    <citation type="journal article" date="2003" name="Proc. Natl. Acad. Sci. U.S.A.">
        <title>The genome sequence of Blochmannia floridanus: comparative analysis of reduced genomes.</title>
        <authorList>
            <person name="Gil R."/>
            <person name="Silva F.J."/>
            <person name="Zientz E."/>
            <person name="Delmotte F."/>
            <person name="Gonzalez-Candelas F."/>
            <person name="Latorre A."/>
            <person name="Rausell C."/>
            <person name="Kamerbeek J."/>
            <person name="Gadau J."/>
            <person name="Hoelldobler B."/>
            <person name="van Ham R.C.H.J."/>
            <person name="Gross R."/>
            <person name="Moya A."/>
        </authorList>
    </citation>
    <scope>NUCLEOTIDE SEQUENCE [LARGE SCALE GENOMIC DNA]</scope>
</reference>
<feature type="chain" id="PRO_0000209563" description="Lipoate-protein ligase A">
    <location>
        <begin position="1"/>
        <end position="337"/>
    </location>
</feature>
<feature type="domain" description="BPL/LPL catalytic" evidence="2">
    <location>
        <begin position="29"/>
        <end position="216"/>
    </location>
</feature>
<feature type="binding site" evidence="1">
    <location>
        <position position="71"/>
    </location>
    <ligand>
        <name>ATP</name>
        <dbReference type="ChEBI" id="CHEBI:30616"/>
    </ligand>
</feature>
<feature type="binding site" evidence="1">
    <location>
        <begin position="76"/>
        <end position="79"/>
    </location>
    <ligand>
        <name>ATP</name>
        <dbReference type="ChEBI" id="CHEBI:30616"/>
    </ligand>
</feature>
<feature type="binding site" evidence="1">
    <location>
        <position position="134"/>
    </location>
    <ligand>
        <name>(R)-lipoate</name>
        <dbReference type="ChEBI" id="CHEBI:83088"/>
    </ligand>
</feature>
<feature type="binding site" evidence="1">
    <location>
        <position position="134"/>
    </location>
    <ligand>
        <name>ATP</name>
        <dbReference type="ChEBI" id="CHEBI:30616"/>
    </ligand>
</feature>
<name>LPLA_BLOFL</name>
<sequence length="337" mass="39260">MIPLRLLFSTSYNPWFNLSLEEYIFKNMDQNQTILFLWRNQNTIVIGRSQNAWKECNTRRMNRDGVKLARRHSGGGAVFHDLGNTCFTFMSTQKNYNKNVSFKIILDGLNSLNISAKISGRNDLIINTNQGDRKISGSAYRQVSDRQLHHGTLLLNVDINKLSYYLNPDSKKLKSKGITSVNSRIINLNTLHANITHDLVCNQLKTAFFNYYQTTVESEIISIKNFNHIKDFSKQFNKQRSWQWNFGNTPSFSHYLDNRFNWGSVELHFDISHGMINRSHIFTDSLNPEPLEELSKKLIGISYNAVTIQHCCQEWTKNWPQFQELQEVTHWLITNVT</sequence>
<protein>
    <recommendedName>
        <fullName evidence="1">Lipoate-protein ligase A</fullName>
        <ecNumber evidence="1">6.3.1.20</ecNumber>
    </recommendedName>
    <alternativeName>
        <fullName evidence="1">Lipoate--protein ligase</fullName>
    </alternativeName>
</protein>
<keyword id="KW-0067">ATP-binding</keyword>
<keyword id="KW-0963">Cytoplasm</keyword>
<keyword id="KW-0436">Ligase</keyword>
<keyword id="KW-0547">Nucleotide-binding</keyword>
<keyword id="KW-1185">Reference proteome</keyword>
<evidence type="ECO:0000255" key="1">
    <source>
        <dbReference type="HAMAP-Rule" id="MF_01602"/>
    </source>
</evidence>
<evidence type="ECO:0000255" key="2">
    <source>
        <dbReference type="PROSITE-ProRule" id="PRU01067"/>
    </source>
</evidence>
<organism>
    <name type="scientific">Blochmanniella floridana</name>
    <dbReference type="NCBI Taxonomy" id="203907"/>
    <lineage>
        <taxon>Bacteria</taxon>
        <taxon>Pseudomonadati</taxon>
        <taxon>Pseudomonadota</taxon>
        <taxon>Gammaproteobacteria</taxon>
        <taxon>Enterobacterales</taxon>
        <taxon>Enterobacteriaceae</taxon>
        <taxon>ant endosymbionts</taxon>
        <taxon>Candidatus Blochmanniella</taxon>
    </lineage>
</organism>